<feature type="chain" id="PRO_0000060317" description="tRNA (guanine-N(1)-)-methyltransferase">
    <location>
        <begin position="1"/>
        <end position="257"/>
    </location>
</feature>
<feature type="binding site" evidence="1">
    <location>
        <position position="115"/>
    </location>
    <ligand>
        <name>S-adenosyl-L-methionine</name>
        <dbReference type="ChEBI" id="CHEBI:59789"/>
    </ligand>
</feature>
<feature type="binding site" evidence="1">
    <location>
        <begin position="134"/>
        <end position="139"/>
    </location>
    <ligand>
        <name>S-adenosyl-L-methionine</name>
        <dbReference type="ChEBI" id="CHEBI:59789"/>
    </ligand>
</feature>
<feature type="strand" evidence="4">
    <location>
        <begin position="6"/>
        <end position="13"/>
    </location>
</feature>
<feature type="helix" evidence="4">
    <location>
        <begin position="15"/>
        <end position="21"/>
    </location>
</feature>
<feature type="helix" evidence="4">
    <location>
        <begin position="25"/>
        <end position="32"/>
    </location>
</feature>
<feature type="strand" evidence="4">
    <location>
        <begin position="35"/>
        <end position="42"/>
    </location>
</feature>
<feature type="helix" evidence="4">
    <location>
        <begin position="43"/>
        <end position="46"/>
    </location>
</feature>
<feature type="strand" evidence="4">
    <location>
        <begin position="56"/>
        <end position="58"/>
    </location>
</feature>
<feature type="helix" evidence="4">
    <location>
        <begin position="67"/>
        <end position="81"/>
    </location>
</feature>
<feature type="strand" evidence="4">
    <location>
        <begin position="85"/>
        <end position="89"/>
    </location>
</feature>
<feature type="helix" evidence="4">
    <location>
        <begin position="98"/>
        <end position="105"/>
    </location>
</feature>
<feature type="strand" evidence="4">
    <location>
        <begin position="108"/>
        <end position="114"/>
    </location>
</feature>
<feature type="helix" evidence="4">
    <location>
        <begin position="122"/>
        <end position="127"/>
    </location>
</feature>
<feature type="strand" evidence="4">
    <location>
        <begin position="140"/>
        <end position="142"/>
    </location>
</feature>
<feature type="helix" evidence="4">
    <location>
        <begin position="143"/>
        <end position="155"/>
    </location>
</feature>
<feature type="turn" evidence="4">
    <location>
        <begin position="158"/>
        <end position="160"/>
    </location>
</feature>
<feature type="strand" evidence="4">
    <location>
        <begin position="186"/>
        <end position="188"/>
    </location>
</feature>
<feature type="helix" evidence="4">
    <location>
        <begin position="195"/>
        <end position="197"/>
    </location>
</feature>
<feature type="strand" evidence="4">
    <location>
        <begin position="201"/>
        <end position="203"/>
    </location>
</feature>
<feature type="turn" evidence="4">
    <location>
        <begin position="204"/>
        <end position="206"/>
    </location>
</feature>
<feature type="helix" evidence="4">
    <location>
        <begin position="207"/>
        <end position="213"/>
    </location>
</feature>
<feature type="turn" evidence="4">
    <location>
        <begin position="214"/>
        <end position="216"/>
    </location>
</feature>
<feature type="helix" evidence="4">
    <location>
        <begin position="217"/>
        <end position="219"/>
    </location>
</feature>
<feature type="helix" evidence="4">
    <location>
        <begin position="228"/>
        <end position="230"/>
    </location>
</feature>
<feature type="turn" evidence="4">
    <location>
        <begin position="231"/>
        <end position="234"/>
    </location>
</feature>
<evidence type="ECO:0000250" key="1"/>
<evidence type="ECO:0000269" key="2">
    <source>
    </source>
</evidence>
<evidence type="ECO:0000305" key="3"/>
<evidence type="ECO:0007829" key="4">
    <source>
        <dbReference type="PDB" id="1OY5"/>
    </source>
</evidence>
<name>TRMD_AQUAE</name>
<protein>
    <recommendedName>
        <fullName>tRNA (guanine-N(1)-)-methyltransferase</fullName>
        <ecNumber>2.1.1.228</ecNumber>
    </recommendedName>
    <alternativeName>
        <fullName>M1G-methyltransferase</fullName>
    </alternativeName>
    <alternativeName>
        <fullName>tRNA [GM37] methyltransferase</fullName>
    </alternativeName>
</protein>
<reference key="1">
    <citation type="journal article" date="1998" name="Nature">
        <title>The complete genome of the hyperthermophilic bacterium Aquifex aeolicus.</title>
        <authorList>
            <person name="Deckert G."/>
            <person name="Warren P.V."/>
            <person name="Gaasterland T."/>
            <person name="Young W.G."/>
            <person name="Lenox A.L."/>
            <person name="Graham D.E."/>
            <person name="Overbeek R."/>
            <person name="Snead M.A."/>
            <person name="Keller M."/>
            <person name="Aujay M."/>
            <person name="Huber R."/>
            <person name="Feldman R.A."/>
            <person name="Short J.M."/>
            <person name="Olsen G.J."/>
            <person name="Swanson R.V."/>
        </authorList>
    </citation>
    <scope>NUCLEOTIDE SEQUENCE [LARGE SCALE GENOMIC DNA]</scope>
    <source>
        <strain>VF5</strain>
    </source>
</reference>
<reference key="2">
    <citation type="journal article" date="2003" name="Proteins">
        <title>Crystal structure of tRNA (m1G37) methyltransferase from Aquifex aeolicus at 2.6 A resolution: a novel methyltransferase fold.</title>
        <authorList>
            <person name="Liu J."/>
            <person name="Wang W."/>
            <person name="Shin D.H."/>
            <person name="Yokota H."/>
            <person name="Kim R."/>
            <person name="Kim S.-H."/>
        </authorList>
    </citation>
    <scope>X-RAY CRYSTALLOGRAPHY (2.6 ANGSTROMS)</scope>
    <scope>SUBUNIT</scope>
</reference>
<comment type="function">
    <text evidence="1">Specifically methylates guanosine-37 in various tRNAs.</text>
</comment>
<comment type="catalytic activity">
    <reaction>
        <text>guanosine(37) in tRNA + S-adenosyl-L-methionine = N(1)-methylguanosine(37) in tRNA + S-adenosyl-L-homocysteine + H(+)</text>
        <dbReference type="Rhea" id="RHEA:36899"/>
        <dbReference type="Rhea" id="RHEA-COMP:10145"/>
        <dbReference type="Rhea" id="RHEA-COMP:10147"/>
        <dbReference type="ChEBI" id="CHEBI:15378"/>
        <dbReference type="ChEBI" id="CHEBI:57856"/>
        <dbReference type="ChEBI" id="CHEBI:59789"/>
        <dbReference type="ChEBI" id="CHEBI:73542"/>
        <dbReference type="ChEBI" id="CHEBI:74269"/>
        <dbReference type="EC" id="2.1.1.228"/>
    </reaction>
</comment>
<comment type="subunit">
    <text evidence="2">Homodimer.</text>
</comment>
<comment type="subcellular location">
    <subcellularLocation>
        <location evidence="3">Cytoplasm</location>
    </subcellularLocation>
</comment>
<comment type="similarity">
    <text evidence="3">Belongs to the RNA methyltransferase TrmD family.</text>
</comment>
<accession>O67463</accession>
<sequence>MSSNPLRFFVLTIFPHIISCYSEYGIVKQAIKKGKVEVYPIDLREFAPKGQVDDVPYGGLPGMVLKPEPIYEAYDYVVENYGKPFVLITEPWGEKLNQKLVNELSKKERIMIICGRYEGVDERVKKIVDMEISLGDFILSGGEIVALAVIDAVSRVLPGVLSEPQSIQEDSFQNRWLGYPVYTRPREYRGMKVPEELLSGHHKLIELWKLWHRIENTVKKRPDLIPKDLTELEKDILNSILSGKSFKEWLKEHKHLL</sequence>
<organism>
    <name type="scientific">Aquifex aeolicus (strain VF5)</name>
    <dbReference type="NCBI Taxonomy" id="224324"/>
    <lineage>
        <taxon>Bacteria</taxon>
        <taxon>Pseudomonadati</taxon>
        <taxon>Aquificota</taxon>
        <taxon>Aquificia</taxon>
        <taxon>Aquificales</taxon>
        <taxon>Aquificaceae</taxon>
        <taxon>Aquifex</taxon>
    </lineage>
</organism>
<gene>
    <name type="primary">trmD</name>
    <name type="ordered locus">aq_1489</name>
</gene>
<dbReference type="EC" id="2.1.1.228"/>
<dbReference type="EMBL" id="AE000657">
    <property type="protein sequence ID" value="AAC07418.1"/>
    <property type="molecule type" value="Genomic_DNA"/>
</dbReference>
<dbReference type="PIR" id="E70429">
    <property type="entry name" value="E70429"/>
</dbReference>
<dbReference type="RefSeq" id="NP_214028.1">
    <property type="nucleotide sequence ID" value="NC_000918.1"/>
</dbReference>
<dbReference type="RefSeq" id="WP_010880966.1">
    <property type="nucleotide sequence ID" value="NC_000918.1"/>
</dbReference>
<dbReference type="PDB" id="1OY5">
    <property type="method" value="X-ray"/>
    <property type="resolution" value="2.60 A"/>
    <property type="chains" value="A/B/C=1-257"/>
</dbReference>
<dbReference type="PDBsum" id="1OY5"/>
<dbReference type="SMR" id="O67463"/>
<dbReference type="FunCoup" id="O67463">
    <property type="interactions" value="420"/>
</dbReference>
<dbReference type="STRING" id="224324.aq_1489"/>
<dbReference type="EnsemblBacteria" id="AAC07418">
    <property type="protein sequence ID" value="AAC07418"/>
    <property type="gene ID" value="aq_1489"/>
</dbReference>
<dbReference type="KEGG" id="aae:aq_1489"/>
<dbReference type="PATRIC" id="fig|224324.8.peg.1161"/>
<dbReference type="eggNOG" id="COG0336">
    <property type="taxonomic scope" value="Bacteria"/>
</dbReference>
<dbReference type="HOGENOM" id="CLU_047363_0_1_0"/>
<dbReference type="InParanoid" id="O67463"/>
<dbReference type="OrthoDB" id="9807416at2"/>
<dbReference type="BRENDA" id="2.1.1.228">
    <property type="organism ID" value="396"/>
</dbReference>
<dbReference type="EvolutionaryTrace" id="O67463"/>
<dbReference type="Proteomes" id="UP000000798">
    <property type="component" value="Chromosome"/>
</dbReference>
<dbReference type="GO" id="GO:0005829">
    <property type="term" value="C:cytosol"/>
    <property type="evidence" value="ECO:0000318"/>
    <property type="project" value="GO_Central"/>
</dbReference>
<dbReference type="GO" id="GO:0052906">
    <property type="term" value="F:tRNA (guanine(37)-N1)-methyltransferase activity"/>
    <property type="evidence" value="ECO:0000318"/>
    <property type="project" value="GO_Central"/>
</dbReference>
<dbReference type="GO" id="GO:0002939">
    <property type="term" value="P:tRNA N1-guanine methylation"/>
    <property type="evidence" value="ECO:0000318"/>
    <property type="project" value="GO_Central"/>
</dbReference>
<dbReference type="CDD" id="cd18080">
    <property type="entry name" value="TrmD-like"/>
    <property type="match status" value="1"/>
</dbReference>
<dbReference type="FunFam" id="1.10.1270.20:FF:000005">
    <property type="entry name" value="tRNA (guanine-N(1)-)-methyltransferase"/>
    <property type="match status" value="1"/>
</dbReference>
<dbReference type="Gene3D" id="3.40.1280.10">
    <property type="match status" value="1"/>
</dbReference>
<dbReference type="Gene3D" id="1.10.1270.20">
    <property type="entry name" value="tRNA(m1g37)methyltransferase, domain 2"/>
    <property type="match status" value="1"/>
</dbReference>
<dbReference type="HAMAP" id="MF_00605">
    <property type="entry name" value="TrmD"/>
    <property type="match status" value="1"/>
</dbReference>
<dbReference type="InterPro" id="IPR029028">
    <property type="entry name" value="Alpha/beta_knot_MTases"/>
</dbReference>
<dbReference type="InterPro" id="IPR023148">
    <property type="entry name" value="tRNA_m1G_MeTrfase_C_sf"/>
</dbReference>
<dbReference type="InterPro" id="IPR002649">
    <property type="entry name" value="tRNA_m1G_MeTrfase_TrmD"/>
</dbReference>
<dbReference type="InterPro" id="IPR029026">
    <property type="entry name" value="tRNA_m1G_MTases_N"/>
</dbReference>
<dbReference type="InterPro" id="IPR016009">
    <property type="entry name" value="tRNA_MeTrfase_TRMD/TRM10"/>
</dbReference>
<dbReference type="NCBIfam" id="NF000648">
    <property type="entry name" value="PRK00026.1"/>
    <property type="match status" value="1"/>
</dbReference>
<dbReference type="NCBIfam" id="TIGR00088">
    <property type="entry name" value="trmD"/>
    <property type="match status" value="1"/>
</dbReference>
<dbReference type="PANTHER" id="PTHR46417">
    <property type="entry name" value="TRNA (GUANINE-N(1)-)-METHYLTRANSFERASE"/>
    <property type="match status" value="1"/>
</dbReference>
<dbReference type="PANTHER" id="PTHR46417:SF1">
    <property type="entry name" value="TRNA (GUANINE-N(1)-)-METHYLTRANSFERASE"/>
    <property type="match status" value="1"/>
</dbReference>
<dbReference type="Pfam" id="PF01746">
    <property type="entry name" value="tRNA_m1G_MT"/>
    <property type="match status" value="1"/>
</dbReference>
<dbReference type="PIRSF" id="PIRSF000386">
    <property type="entry name" value="tRNA_mtase"/>
    <property type="match status" value="1"/>
</dbReference>
<dbReference type="SUPFAM" id="SSF75217">
    <property type="entry name" value="alpha/beta knot"/>
    <property type="match status" value="1"/>
</dbReference>
<proteinExistence type="evidence at protein level"/>
<keyword id="KW-0002">3D-structure</keyword>
<keyword id="KW-0963">Cytoplasm</keyword>
<keyword id="KW-0489">Methyltransferase</keyword>
<keyword id="KW-1185">Reference proteome</keyword>
<keyword id="KW-0949">S-adenosyl-L-methionine</keyword>
<keyword id="KW-0808">Transferase</keyword>
<keyword id="KW-0819">tRNA processing</keyword>